<organism>
    <name type="scientific">Escherichia coli O17:K52:H18 (strain UMN026 / ExPEC)</name>
    <dbReference type="NCBI Taxonomy" id="585056"/>
    <lineage>
        <taxon>Bacteria</taxon>
        <taxon>Pseudomonadati</taxon>
        <taxon>Pseudomonadota</taxon>
        <taxon>Gammaproteobacteria</taxon>
        <taxon>Enterobacterales</taxon>
        <taxon>Enterobacteriaceae</taxon>
        <taxon>Escherichia</taxon>
    </lineage>
</organism>
<proteinExistence type="inferred from homology"/>
<reference key="1">
    <citation type="journal article" date="2009" name="PLoS Genet.">
        <title>Organised genome dynamics in the Escherichia coli species results in highly diverse adaptive paths.</title>
        <authorList>
            <person name="Touchon M."/>
            <person name="Hoede C."/>
            <person name="Tenaillon O."/>
            <person name="Barbe V."/>
            <person name="Baeriswyl S."/>
            <person name="Bidet P."/>
            <person name="Bingen E."/>
            <person name="Bonacorsi S."/>
            <person name="Bouchier C."/>
            <person name="Bouvet O."/>
            <person name="Calteau A."/>
            <person name="Chiapello H."/>
            <person name="Clermont O."/>
            <person name="Cruveiller S."/>
            <person name="Danchin A."/>
            <person name="Diard M."/>
            <person name="Dossat C."/>
            <person name="Karoui M.E."/>
            <person name="Frapy E."/>
            <person name="Garry L."/>
            <person name="Ghigo J.M."/>
            <person name="Gilles A.M."/>
            <person name="Johnson J."/>
            <person name="Le Bouguenec C."/>
            <person name="Lescat M."/>
            <person name="Mangenot S."/>
            <person name="Martinez-Jehanne V."/>
            <person name="Matic I."/>
            <person name="Nassif X."/>
            <person name="Oztas S."/>
            <person name="Petit M.A."/>
            <person name="Pichon C."/>
            <person name="Rouy Z."/>
            <person name="Ruf C.S."/>
            <person name="Schneider D."/>
            <person name="Tourret J."/>
            <person name="Vacherie B."/>
            <person name="Vallenet D."/>
            <person name="Medigue C."/>
            <person name="Rocha E.P.C."/>
            <person name="Denamur E."/>
        </authorList>
    </citation>
    <scope>NUCLEOTIDE SEQUENCE [LARGE SCALE GENOMIC DNA]</scope>
    <source>
        <strain>UMN026 / ExPEC</strain>
    </source>
</reference>
<gene>
    <name evidence="1" type="primary">crl</name>
    <name type="ordered locus">ECUMN_0306</name>
</gene>
<comment type="function">
    <text evidence="1">Binds to the sigma-S subunit of RNA polymerase, activating expression of sigma-S-regulated genes. Stimulates RNA polymerase holoenzyme formation and may bind to several other sigma factors, such as sigma-70 and sigma-32.</text>
</comment>
<comment type="subcellular location">
    <subcellularLocation>
        <location evidence="1">Cytoplasm</location>
    </subcellularLocation>
</comment>
<comment type="similarity">
    <text evidence="1">Belongs to the Crl family.</text>
</comment>
<keyword id="KW-0010">Activator</keyword>
<keyword id="KW-0175">Coiled coil</keyword>
<keyword id="KW-0963">Cytoplasm</keyword>
<keyword id="KW-0804">Transcription</keyword>
<keyword id="KW-0805">Transcription regulation</keyword>
<accession>B7N8H1</accession>
<protein>
    <recommendedName>
        <fullName evidence="1">Sigma factor-binding protein Crl</fullName>
    </recommendedName>
</protein>
<feature type="chain" id="PRO_1000138139" description="Sigma factor-binding protein Crl">
    <location>
        <begin position="1"/>
        <end position="133"/>
    </location>
</feature>
<feature type="region of interest" description="Essential for activity" evidence="1">
    <location>
        <begin position="99"/>
        <end position="122"/>
    </location>
</feature>
<feature type="coiled-coil region" evidence="1">
    <location>
        <begin position="90"/>
        <end position="116"/>
    </location>
</feature>
<dbReference type="EMBL" id="CU928163">
    <property type="protein sequence ID" value="CAR11521.1"/>
    <property type="molecule type" value="Genomic_DNA"/>
</dbReference>
<dbReference type="RefSeq" id="WP_000174684.1">
    <property type="nucleotide sequence ID" value="NC_011751.1"/>
</dbReference>
<dbReference type="RefSeq" id="YP_002411075.1">
    <property type="nucleotide sequence ID" value="NC_011751.1"/>
</dbReference>
<dbReference type="SMR" id="B7N8H1"/>
<dbReference type="STRING" id="585056.ECUMN_0306"/>
<dbReference type="KEGG" id="eum:ECUMN_0306"/>
<dbReference type="PATRIC" id="fig|585056.7.peg.501"/>
<dbReference type="HOGENOM" id="CLU_136773_0_0_6"/>
<dbReference type="Proteomes" id="UP000007097">
    <property type="component" value="Chromosome"/>
</dbReference>
<dbReference type="GO" id="GO:0005737">
    <property type="term" value="C:cytoplasm"/>
    <property type="evidence" value="ECO:0007669"/>
    <property type="project" value="UniProtKB-SubCell"/>
</dbReference>
<dbReference type="GO" id="GO:0045893">
    <property type="term" value="P:positive regulation of DNA-templated transcription"/>
    <property type="evidence" value="ECO:0007669"/>
    <property type="project" value="UniProtKB-UniRule"/>
</dbReference>
<dbReference type="FunFam" id="3.30.310.230:FF:000001">
    <property type="entry name" value="Sigma factor-binding protein Crl"/>
    <property type="match status" value="1"/>
</dbReference>
<dbReference type="Gene3D" id="3.30.310.230">
    <property type="entry name" value="Sigma factor-binding protein Crl monomer"/>
    <property type="match status" value="1"/>
</dbReference>
<dbReference type="HAMAP" id="MF_01178">
    <property type="entry name" value="Crl"/>
    <property type="match status" value="1"/>
</dbReference>
<dbReference type="InterPro" id="IPR009986">
    <property type="entry name" value="Tscrpt_reg_Crl"/>
</dbReference>
<dbReference type="InterPro" id="IPR038208">
    <property type="entry name" value="Tscrpt_reg_Crl_sf"/>
</dbReference>
<dbReference type="NCBIfam" id="NF008217">
    <property type="entry name" value="PRK10984.1"/>
    <property type="match status" value="1"/>
</dbReference>
<dbReference type="Pfam" id="PF07417">
    <property type="entry name" value="Crl"/>
    <property type="match status" value="1"/>
</dbReference>
<sequence>MTLPSGHPKSRLIKKFTALGPYIREGKCEDNRFFFDCLAVCVNVKPAPEVREFWGWWMELEAQESRFTYSYQFGLFDKAGDWTSVQIKDAEVVERLEHTLREFHEKLRELLATLNLKLEPADDFRDEPVKLTA</sequence>
<name>CRL_ECOLU</name>
<evidence type="ECO:0000255" key="1">
    <source>
        <dbReference type="HAMAP-Rule" id="MF_01178"/>
    </source>
</evidence>